<name>Y4046_RHIWR</name>
<reference key="1">
    <citation type="journal article" date="2010" name="J. Bacteriol.">
        <title>Genome sequence of the dioxin-mineralizing bacterium Sphingomonas wittichii RW1.</title>
        <authorList>
            <person name="Miller T.R."/>
            <person name="Delcher A.L."/>
            <person name="Salzberg S.L."/>
            <person name="Saunders E."/>
            <person name="Detter J.C."/>
            <person name="Halden R.U."/>
        </authorList>
    </citation>
    <scope>NUCLEOTIDE SEQUENCE [LARGE SCALE GENOMIC DNA]</scope>
    <source>
        <strain>DSM 6014 / CCUG 31198 / JCM 15750 / NBRC 105917 / EY 4224 / RW1</strain>
    </source>
</reference>
<sequence>MMIAIPGVLSGRTLDHVRTLVTEAEWVDGNATSGHQSALAKKNRQLPEDGDAAREAGGIILDALGATPLFIAAALPLKVFPPLFNLYGGGERFDTHVDNAIRMKRGTDFRIRSDLSATLFLNDPDSYDGGELVVEDTLGTHKVKLGAGDMILYPASSLHHVTPVTRGERLCSFFWIQSMVRDDGARRTLFDLDTAIQAVAADRGQDDPAIIRLTGVYHNLLRRWAEA</sequence>
<comment type="cofactor">
    <cofactor evidence="1">
        <name>Fe(2+)</name>
        <dbReference type="ChEBI" id="CHEBI:29033"/>
    </cofactor>
    <text evidence="1">Binds 1 Fe(2+) ion per subunit.</text>
</comment>
<comment type="cofactor">
    <cofactor evidence="1">
        <name>L-ascorbate</name>
        <dbReference type="ChEBI" id="CHEBI:38290"/>
    </cofactor>
</comment>
<protein>
    <recommendedName>
        <fullName evidence="1">PKHD-type hydroxylase Swit_4046</fullName>
        <ecNumber evidence="1">1.14.11.-</ecNumber>
    </recommendedName>
</protein>
<feature type="chain" id="PRO_1000061744" description="PKHD-type hydroxylase Swit_4046">
    <location>
        <begin position="1"/>
        <end position="227"/>
    </location>
</feature>
<feature type="domain" description="Fe2OG dioxygenase" evidence="1">
    <location>
        <begin position="78"/>
        <end position="178"/>
    </location>
</feature>
<feature type="binding site" evidence="1">
    <location>
        <position position="96"/>
    </location>
    <ligand>
        <name>Fe cation</name>
        <dbReference type="ChEBI" id="CHEBI:24875"/>
    </ligand>
</feature>
<feature type="binding site" evidence="1">
    <location>
        <position position="98"/>
    </location>
    <ligand>
        <name>Fe cation</name>
        <dbReference type="ChEBI" id="CHEBI:24875"/>
    </ligand>
</feature>
<feature type="binding site" evidence="1">
    <location>
        <position position="159"/>
    </location>
    <ligand>
        <name>Fe cation</name>
        <dbReference type="ChEBI" id="CHEBI:24875"/>
    </ligand>
</feature>
<feature type="binding site" evidence="1">
    <location>
        <position position="169"/>
    </location>
    <ligand>
        <name>2-oxoglutarate</name>
        <dbReference type="ChEBI" id="CHEBI:16810"/>
    </ligand>
</feature>
<organism>
    <name type="scientific">Rhizorhabdus wittichii (strain DSM 6014 / CCUG 31198 / JCM 15750 / NBRC 105917 / EY 4224 / RW1)</name>
    <name type="common">Sphingomonas wittichii</name>
    <dbReference type="NCBI Taxonomy" id="392499"/>
    <lineage>
        <taxon>Bacteria</taxon>
        <taxon>Pseudomonadati</taxon>
        <taxon>Pseudomonadota</taxon>
        <taxon>Alphaproteobacteria</taxon>
        <taxon>Sphingomonadales</taxon>
        <taxon>Sphingomonadaceae</taxon>
        <taxon>Rhizorhabdus</taxon>
    </lineage>
</organism>
<keyword id="KW-0223">Dioxygenase</keyword>
<keyword id="KW-0408">Iron</keyword>
<keyword id="KW-0479">Metal-binding</keyword>
<keyword id="KW-0560">Oxidoreductase</keyword>
<keyword id="KW-1185">Reference proteome</keyword>
<keyword id="KW-0847">Vitamin C</keyword>
<dbReference type="EC" id="1.14.11.-" evidence="1"/>
<dbReference type="EMBL" id="CP000699">
    <property type="protein sequence ID" value="ABQ70390.1"/>
    <property type="molecule type" value="Genomic_DNA"/>
</dbReference>
<dbReference type="SMR" id="A5VDM4"/>
<dbReference type="STRING" id="392499.Swit_4046"/>
<dbReference type="PaxDb" id="392499-Swit_4046"/>
<dbReference type="KEGG" id="swi:Swit_4046"/>
<dbReference type="eggNOG" id="COG3128">
    <property type="taxonomic scope" value="Bacteria"/>
</dbReference>
<dbReference type="HOGENOM" id="CLU_106663_0_0_5"/>
<dbReference type="OrthoDB" id="9812472at2"/>
<dbReference type="Proteomes" id="UP000001989">
    <property type="component" value="Chromosome"/>
</dbReference>
<dbReference type="GO" id="GO:0016706">
    <property type="term" value="F:2-oxoglutarate-dependent dioxygenase activity"/>
    <property type="evidence" value="ECO:0007669"/>
    <property type="project" value="UniProtKB-UniRule"/>
</dbReference>
<dbReference type="GO" id="GO:0005506">
    <property type="term" value="F:iron ion binding"/>
    <property type="evidence" value="ECO:0007669"/>
    <property type="project" value="UniProtKB-UniRule"/>
</dbReference>
<dbReference type="GO" id="GO:0031418">
    <property type="term" value="F:L-ascorbic acid binding"/>
    <property type="evidence" value="ECO:0007669"/>
    <property type="project" value="UniProtKB-KW"/>
</dbReference>
<dbReference type="GO" id="GO:0006974">
    <property type="term" value="P:DNA damage response"/>
    <property type="evidence" value="ECO:0007669"/>
    <property type="project" value="TreeGrafter"/>
</dbReference>
<dbReference type="GO" id="GO:0006879">
    <property type="term" value="P:intracellular iron ion homeostasis"/>
    <property type="evidence" value="ECO:0007669"/>
    <property type="project" value="TreeGrafter"/>
</dbReference>
<dbReference type="Gene3D" id="2.60.120.620">
    <property type="entry name" value="q2cbj1_9rhob like domain"/>
    <property type="match status" value="1"/>
</dbReference>
<dbReference type="Gene3D" id="4.10.860.20">
    <property type="entry name" value="Rabenosyn, Rab binding domain"/>
    <property type="match status" value="1"/>
</dbReference>
<dbReference type="HAMAP" id="MF_00657">
    <property type="entry name" value="Hydroxyl_YbiX"/>
    <property type="match status" value="1"/>
</dbReference>
<dbReference type="InterPro" id="IPR005123">
    <property type="entry name" value="Oxoglu/Fe-dep_dioxygenase_dom"/>
</dbReference>
<dbReference type="InterPro" id="IPR041097">
    <property type="entry name" value="PKHD_C"/>
</dbReference>
<dbReference type="InterPro" id="IPR023550">
    <property type="entry name" value="PKHD_hydroxylase"/>
</dbReference>
<dbReference type="InterPro" id="IPR006620">
    <property type="entry name" value="Pro_4_hyd_alph"/>
</dbReference>
<dbReference type="InterPro" id="IPR044862">
    <property type="entry name" value="Pro_4_hyd_alph_FE2OG_OXY"/>
</dbReference>
<dbReference type="NCBIfam" id="NF003973">
    <property type="entry name" value="PRK05467.1-2"/>
    <property type="match status" value="1"/>
</dbReference>
<dbReference type="NCBIfam" id="NF003974">
    <property type="entry name" value="PRK05467.1-3"/>
    <property type="match status" value="1"/>
</dbReference>
<dbReference type="NCBIfam" id="NF003975">
    <property type="entry name" value="PRK05467.1-4"/>
    <property type="match status" value="1"/>
</dbReference>
<dbReference type="PANTHER" id="PTHR41536">
    <property type="entry name" value="PKHD-TYPE HYDROXYLASE YBIX"/>
    <property type="match status" value="1"/>
</dbReference>
<dbReference type="PANTHER" id="PTHR41536:SF1">
    <property type="entry name" value="PKHD-TYPE HYDROXYLASE YBIX"/>
    <property type="match status" value="1"/>
</dbReference>
<dbReference type="Pfam" id="PF13640">
    <property type="entry name" value="2OG-FeII_Oxy_3"/>
    <property type="match status" value="1"/>
</dbReference>
<dbReference type="Pfam" id="PF18331">
    <property type="entry name" value="PKHD_C"/>
    <property type="match status" value="1"/>
</dbReference>
<dbReference type="SMART" id="SM00702">
    <property type="entry name" value="P4Hc"/>
    <property type="match status" value="1"/>
</dbReference>
<dbReference type="PROSITE" id="PS51471">
    <property type="entry name" value="FE2OG_OXY"/>
    <property type="match status" value="1"/>
</dbReference>
<proteinExistence type="inferred from homology"/>
<accession>A5VDM4</accession>
<gene>
    <name type="ordered locus">Swit_4046</name>
</gene>
<evidence type="ECO:0000255" key="1">
    <source>
        <dbReference type="HAMAP-Rule" id="MF_00657"/>
    </source>
</evidence>